<organism>
    <name type="scientific">Pagothenia borchgrevinki</name>
    <name type="common">Bald rockcod</name>
    <name type="synonym">Trematomus borchgrevinki</name>
    <dbReference type="NCBI Taxonomy" id="8213"/>
    <lineage>
        <taxon>Eukaryota</taxon>
        <taxon>Metazoa</taxon>
        <taxon>Chordata</taxon>
        <taxon>Craniata</taxon>
        <taxon>Vertebrata</taxon>
        <taxon>Euteleostomi</taxon>
        <taxon>Actinopterygii</taxon>
        <taxon>Neopterygii</taxon>
        <taxon>Teleostei</taxon>
        <taxon>Neoteleostei</taxon>
        <taxon>Acanthomorphata</taxon>
        <taxon>Eupercaria</taxon>
        <taxon>Perciformes</taxon>
        <taxon>Notothenioidei</taxon>
        <taxon>Nototheniidae</taxon>
        <taxon>Pagothenia</taxon>
    </lineage>
</organism>
<comment type="function">
    <text evidence="2">Interconverts simultaneously and stereospecifically pyruvate and lactate with concomitant interconversion of NADH and NAD(+).</text>
</comment>
<comment type="catalytic activity">
    <reaction evidence="2">
        <text>(S)-lactate + NAD(+) = pyruvate + NADH + H(+)</text>
        <dbReference type="Rhea" id="RHEA:23444"/>
        <dbReference type="ChEBI" id="CHEBI:15361"/>
        <dbReference type="ChEBI" id="CHEBI:15378"/>
        <dbReference type="ChEBI" id="CHEBI:16651"/>
        <dbReference type="ChEBI" id="CHEBI:57540"/>
        <dbReference type="ChEBI" id="CHEBI:57945"/>
        <dbReference type="EC" id="1.1.1.27"/>
    </reaction>
    <physiologicalReaction direction="left-to-right" evidence="2">
        <dbReference type="Rhea" id="RHEA:23445"/>
    </physiologicalReaction>
    <physiologicalReaction direction="right-to-left" evidence="2">
        <dbReference type="Rhea" id="RHEA:23446"/>
    </physiologicalReaction>
</comment>
<comment type="pathway">
    <text evidence="2">Fermentation; pyruvate fermentation to lactate; (S)-lactate from pyruvate: step 1/1.</text>
</comment>
<comment type="subunit">
    <text evidence="1">Homotetramer.</text>
</comment>
<comment type="subcellular location">
    <subcellularLocation>
        <location evidence="1">Cytoplasm</location>
    </subcellularLocation>
</comment>
<comment type="similarity">
    <text evidence="3">Belongs to the LDH/MDH superfamily. LDH family.</text>
</comment>
<sequence>MSTKEKLISHVMKEEPVGSRNKVTVVGVGMVGMASAISILLKDLCDELAMVDVMEDKLKGEVMDLQHGSLFLKTKIVGDKDYSVTANSKVVVVTAGARQQEGESRLNLVQRNVNIFKFIIPNIVKYSPNCILMVVSNPVDILTYVAWKLSGFPRHRVIGSGTNLDSARFRHLIGEKLHLHPSSCHAWIVGEHGDSSVPVWSGVNVAGVSLQGLNPQMGTEGDGENWKAIHKEVVDGAYEVIKLKGYTSWAIGMSVADLVESIIKNMHKVHPVSTLVQGMHGVKDEVFLSVPCVLGNSGLTDVIHMTLKAEEEKQVQKSAETLWGVQKELTL</sequence>
<keyword id="KW-0963">Cytoplasm</keyword>
<keyword id="KW-0520">NAD</keyword>
<keyword id="KW-0560">Oxidoreductase</keyword>
<name>LDHA_PAGBO</name>
<dbReference type="EC" id="1.1.1.27" evidence="2"/>
<dbReference type="EMBL" id="AF170846">
    <property type="protein sequence ID" value="AAD48486.1"/>
    <property type="molecule type" value="mRNA"/>
</dbReference>
<dbReference type="SMR" id="P69086"/>
<dbReference type="UniPathway" id="UPA00554">
    <property type="reaction ID" value="UER00611"/>
</dbReference>
<dbReference type="GO" id="GO:0005737">
    <property type="term" value="C:cytoplasm"/>
    <property type="evidence" value="ECO:0007669"/>
    <property type="project" value="UniProtKB-SubCell"/>
</dbReference>
<dbReference type="GO" id="GO:0004459">
    <property type="term" value="F:L-lactate dehydrogenase activity"/>
    <property type="evidence" value="ECO:0007669"/>
    <property type="project" value="UniProtKB-EC"/>
</dbReference>
<dbReference type="GO" id="GO:0006089">
    <property type="term" value="P:lactate metabolic process"/>
    <property type="evidence" value="ECO:0007669"/>
    <property type="project" value="TreeGrafter"/>
</dbReference>
<dbReference type="CDD" id="cd05293">
    <property type="entry name" value="LDH_1"/>
    <property type="match status" value="1"/>
</dbReference>
<dbReference type="FunFam" id="3.40.50.720:FF:000029">
    <property type="entry name" value="L-lactate dehydrogenase A chain"/>
    <property type="match status" value="1"/>
</dbReference>
<dbReference type="FunFam" id="3.90.110.10:FF:000003">
    <property type="entry name" value="L-lactate dehydrogenase A chain"/>
    <property type="match status" value="1"/>
</dbReference>
<dbReference type="Gene3D" id="3.90.110.10">
    <property type="entry name" value="Lactate dehydrogenase/glycoside hydrolase, family 4, C-terminal"/>
    <property type="match status" value="1"/>
</dbReference>
<dbReference type="Gene3D" id="3.40.50.720">
    <property type="entry name" value="NAD(P)-binding Rossmann-like Domain"/>
    <property type="match status" value="1"/>
</dbReference>
<dbReference type="HAMAP" id="MF_00488">
    <property type="entry name" value="Lactate_dehydrog"/>
    <property type="match status" value="1"/>
</dbReference>
<dbReference type="InterPro" id="IPR001557">
    <property type="entry name" value="L-lactate/malate_DH"/>
</dbReference>
<dbReference type="InterPro" id="IPR011304">
    <property type="entry name" value="L-lactate_DH"/>
</dbReference>
<dbReference type="InterPro" id="IPR018177">
    <property type="entry name" value="L-lactate_DH_AS"/>
</dbReference>
<dbReference type="InterPro" id="IPR022383">
    <property type="entry name" value="Lactate/malate_DH_C"/>
</dbReference>
<dbReference type="InterPro" id="IPR001236">
    <property type="entry name" value="Lactate/malate_DH_N"/>
</dbReference>
<dbReference type="InterPro" id="IPR015955">
    <property type="entry name" value="Lactate_DH/Glyco_Ohase_4_C"/>
</dbReference>
<dbReference type="InterPro" id="IPR036291">
    <property type="entry name" value="NAD(P)-bd_dom_sf"/>
</dbReference>
<dbReference type="NCBIfam" id="TIGR01771">
    <property type="entry name" value="L-LDH-NAD"/>
    <property type="match status" value="1"/>
</dbReference>
<dbReference type="PANTHER" id="PTHR43128">
    <property type="entry name" value="L-2-HYDROXYCARBOXYLATE DEHYDROGENASE (NAD(P)(+))"/>
    <property type="match status" value="1"/>
</dbReference>
<dbReference type="PANTHER" id="PTHR43128:SF10">
    <property type="entry name" value="L-LACTATE DEHYDROGENASE A CHAIN"/>
    <property type="match status" value="1"/>
</dbReference>
<dbReference type="Pfam" id="PF02866">
    <property type="entry name" value="Ldh_1_C"/>
    <property type="match status" value="1"/>
</dbReference>
<dbReference type="Pfam" id="PF00056">
    <property type="entry name" value="Ldh_1_N"/>
    <property type="match status" value="1"/>
</dbReference>
<dbReference type="PIRSF" id="PIRSF000102">
    <property type="entry name" value="Lac_mal_DH"/>
    <property type="match status" value="1"/>
</dbReference>
<dbReference type="PRINTS" id="PR00086">
    <property type="entry name" value="LLDHDRGNASE"/>
</dbReference>
<dbReference type="SUPFAM" id="SSF56327">
    <property type="entry name" value="LDH C-terminal domain-like"/>
    <property type="match status" value="1"/>
</dbReference>
<dbReference type="SUPFAM" id="SSF51735">
    <property type="entry name" value="NAD(P)-binding Rossmann-fold domains"/>
    <property type="match status" value="1"/>
</dbReference>
<dbReference type="PROSITE" id="PS00064">
    <property type="entry name" value="L_LDH"/>
    <property type="match status" value="1"/>
</dbReference>
<evidence type="ECO:0000250" key="1"/>
<evidence type="ECO:0000250" key="2">
    <source>
        <dbReference type="UniProtKB" id="P00338"/>
    </source>
</evidence>
<evidence type="ECO:0000305" key="3"/>
<gene>
    <name type="primary">ldha</name>
</gene>
<proteinExistence type="evidence at transcript level"/>
<protein>
    <recommendedName>
        <fullName>L-lactate dehydrogenase A chain</fullName>
        <shortName>LDH-A</shortName>
        <ecNumber evidence="2">1.1.1.27</ecNumber>
    </recommendedName>
</protein>
<reference key="1">
    <citation type="submission" date="1999-07" db="EMBL/GenBank/DDBJ databases">
        <title>Cold adaptation in lactate dehydrogenases from Antarctic fish.</title>
        <authorList>
            <person name="Marshall C.J."/>
            <person name="Fleming R.I."/>
        </authorList>
    </citation>
    <scope>NUCLEOTIDE SEQUENCE [MRNA]</scope>
    <source>
        <tissue>Skeletal muscle</tissue>
    </source>
</reference>
<accession>P69086</accession>
<accession>Q9PRH8</accession>
<feature type="initiator methionine" description="Removed" evidence="1">
    <location>
        <position position="1"/>
    </location>
</feature>
<feature type="chain" id="PRO_0000168447" description="L-lactate dehydrogenase A chain">
    <location>
        <begin position="2"/>
        <end position="331"/>
    </location>
</feature>
<feature type="active site" description="Proton acceptor" evidence="1">
    <location>
        <position position="192"/>
    </location>
</feature>
<feature type="binding site" evidence="1">
    <location>
        <begin position="29"/>
        <end position="57"/>
    </location>
    <ligand>
        <name>NAD(+)</name>
        <dbReference type="ChEBI" id="CHEBI:57540"/>
    </ligand>
</feature>
<feature type="binding site" evidence="1">
    <location>
        <position position="98"/>
    </location>
    <ligand>
        <name>NAD(+)</name>
        <dbReference type="ChEBI" id="CHEBI:57540"/>
    </ligand>
</feature>
<feature type="binding site" evidence="1">
    <location>
        <position position="105"/>
    </location>
    <ligand>
        <name>substrate</name>
    </ligand>
</feature>
<feature type="binding site" evidence="1">
    <location>
        <position position="137"/>
    </location>
    <ligand>
        <name>NAD(+)</name>
        <dbReference type="ChEBI" id="CHEBI:57540"/>
    </ligand>
</feature>
<feature type="binding site" evidence="1">
    <location>
        <position position="137"/>
    </location>
    <ligand>
        <name>substrate</name>
    </ligand>
</feature>
<feature type="binding site" evidence="1">
    <location>
        <position position="168"/>
    </location>
    <ligand>
        <name>substrate</name>
    </ligand>
</feature>
<feature type="binding site" evidence="1">
    <location>
        <position position="247"/>
    </location>
    <ligand>
        <name>substrate</name>
    </ligand>
</feature>